<keyword id="KW-0240">DNA-directed RNA polymerase</keyword>
<keyword id="KW-0460">Magnesium</keyword>
<keyword id="KW-0479">Metal-binding</keyword>
<keyword id="KW-0548">Nucleotidyltransferase</keyword>
<keyword id="KW-0804">Transcription</keyword>
<keyword id="KW-0808">Transferase</keyword>
<keyword id="KW-0862">Zinc</keyword>
<reference key="1">
    <citation type="journal article" date="2004" name="Nat. Genet.">
        <title>Comparison of genome degradation in Paratyphi A and Typhi, human-restricted serovars of Salmonella enterica that cause typhoid.</title>
        <authorList>
            <person name="McClelland M."/>
            <person name="Sanderson K.E."/>
            <person name="Clifton S.W."/>
            <person name="Latreille P."/>
            <person name="Porwollik S."/>
            <person name="Sabo A."/>
            <person name="Meyer R."/>
            <person name="Bieri T."/>
            <person name="Ozersky P."/>
            <person name="McLellan M."/>
            <person name="Harkins C.R."/>
            <person name="Wang C."/>
            <person name="Nguyen C."/>
            <person name="Berghoff A."/>
            <person name="Elliott G."/>
            <person name="Kohlberg S."/>
            <person name="Strong C."/>
            <person name="Du F."/>
            <person name="Carter J."/>
            <person name="Kremizki C."/>
            <person name="Layman D."/>
            <person name="Leonard S."/>
            <person name="Sun H."/>
            <person name="Fulton L."/>
            <person name="Nash W."/>
            <person name="Miner T."/>
            <person name="Minx P."/>
            <person name="Delehaunty K."/>
            <person name="Fronick C."/>
            <person name="Magrini V."/>
            <person name="Nhan M."/>
            <person name="Warren W."/>
            <person name="Florea L."/>
            <person name="Spieth J."/>
            <person name="Wilson R.K."/>
        </authorList>
    </citation>
    <scope>NUCLEOTIDE SEQUENCE [LARGE SCALE GENOMIC DNA]</scope>
    <source>
        <strain>ATCC 9150 / SARB42</strain>
    </source>
</reference>
<dbReference type="EC" id="2.7.7.6" evidence="1"/>
<dbReference type="EMBL" id="CP000026">
    <property type="protein sequence ID" value="AAV79744.1"/>
    <property type="molecule type" value="Genomic_DNA"/>
</dbReference>
<dbReference type="RefSeq" id="WP_000653968.1">
    <property type="nucleotide sequence ID" value="NC_006511.1"/>
</dbReference>
<dbReference type="SMR" id="Q5PK92"/>
<dbReference type="KEGG" id="spt:SPA3992"/>
<dbReference type="HOGENOM" id="CLU_000524_3_1_6"/>
<dbReference type="Proteomes" id="UP000008185">
    <property type="component" value="Chromosome"/>
</dbReference>
<dbReference type="GO" id="GO:0000428">
    <property type="term" value="C:DNA-directed RNA polymerase complex"/>
    <property type="evidence" value="ECO:0007669"/>
    <property type="project" value="UniProtKB-KW"/>
</dbReference>
<dbReference type="GO" id="GO:0003677">
    <property type="term" value="F:DNA binding"/>
    <property type="evidence" value="ECO:0007669"/>
    <property type="project" value="UniProtKB-UniRule"/>
</dbReference>
<dbReference type="GO" id="GO:0003899">
    <property type="term" value="F:DNA-directed RNA polymerase activity"/>
    <property type="evidence" value="ECO:0007669"/>
    <property type="project" value="UniProtKB-UniRule"/>
</dbReference>
<dbReference type="GO" id="GO:0000287">
    <property type="term" value="F:magnesium ion binding"/>
    <property type="evidence" value="ECO:0007669"/>
    <property type="project" value="UniProtKB-UniRule"/>
</dbReference>
<dbReference type="GO" id="GO:0008270">
    <property type="term" value="F:zinc ion binding"/>
    <property type="evidence" value="ECO:0007669"/>
    <property type="project" value="UniProtKB-UniRule"/>
</dbReference>
<dbReference type="GO" id="GO:0006351">
    <property type="term" value="P:DNA-templated transcription"/>
    <property type="evidence" value="ECO:0007669"/>
    <property type="project" value="UniProtKB-UniRule"/>
</dbReference>
<dbReference type="CDD" id="cd02655">
    <property type="entry name" value="RNAP_beta'_C"/>
    <property type="match status" value="1"/>
</dbReference>
<dbReference type="CDD" id="cd01609">
    <property type="entry name" value="RNAP_beta'_N"/>
    <property type="match status" value="1"/>
</dbReference>
<dbReference type="FunFam" id="1.10.132.30:FF:000003">
    <property type="entry name" value="DNA-directed RNA polymerase subunit beta"/>
    <property type="match status" value="1"/>
</dbReference>
<dbReference type="FunFam" id="1.10.150.390:FF:000002">
    <property type="entry name" value="DNA-directed RNA polymerase subunit beta"/>
    <property type="match status" value="1"/>
</dbReference>
<dbReference type="FunFam" id="1.10.274.100:FF:000002">
    <property type="entry name" value="DNA-directed RNA polymerase subunit beta"/>
    <property type="match status" value="1"/>
</dbReference>
<dbReference type="FunFam" id="1.10.40.90:FF:000001">
    <property type="entry name" value="DNA-directed RNA polymerase subunit beta"/>
    <property type="match status" value="1"/>
</dbReference>
<dbReference type="FunFam" id="2.40.50.100:FF:000012">
    <property type="entry name" value="DNA-directed RNA polymerase subunit beta"/>
    <property type="match status" value="1"/>
</dbReference>
<dbReference type="FunFam" id="2.40.50.100:FF:000016">
    <property type="entry name" value="DNA-directed RNA polymerase subunit beta"/>
    <property type="match status" value="1"/>
</dbReference>
<dbReference type="FunFam" id="2.40.50.100:FF:000019">
    <property type="entry name" value="DNA-directed RNA polymerase subunit beta"/>
    <property type="match status" value="1"/>
</dbReference>
<dbReference type="FunFam" id="4.10.860.120:FF:000001">
    <property type="entry name" value="DNA-directed RNA polymerase subunit beta"/>
    <property type="match status" value="1"/>
</dbReference>
<dbReference type="Gene3D" id="1.10.132.30">
    <property type="match status" value="1"/>
</dbReference>
<dbReference type="Gene3D" id="1.10.150.390">
    <property type="match status" value="1"/>
</dbReference>
<dbReference type="Gene3D" id="1.10.1790.20">
    <property type="match status" value="1"/>
</dbReference>
<dbReference type="Gene3D" id="1.10.40.90">
    <property type="match status" value="1"/>
</dbReference>
<dbReference type="Gene3D" id="2.40.40.20">
    <property type="match status" value="1"/>
</dbReference>
<dbReference type="Gene3D" id="2.40.50.100">
    <property type="match status" value="3"/>
</dbReference>
<dbReference type="Gene3D" id="4.10.860.120">
    <property type="entry name" value="RNA polymerase II, clamp domain"/>
    <property type="match status" value="1"/>
</dbReference>
<dbReference type="Gene3D" id="1.10.274.100">
    <property type="entry name" value="RNA polymerase Rpb1, domain 3"/>
    <property type="match status" value="2"/>
</dbReference>
<dbReference type="HAMAP" id="MF_01322">
    <property type="entry name" value="RNApol_bact_RpoC"/>
    <property type="match status" value="1"/>
</dbReference>
<dbReference type="InterPro" id="IPR045867">
    <property type="entry name" value="DNA-dir_RpoC_beta_prime"/>
</dbReference>
<dbReference type="InterPro" id="IPR012754">
    <property type="entry name" value="DNA-dir_RpoC_beta_prime_bact"/>
</dbReference>
<dbReference type="InterPro" id="IPR000722">
    <property type="entry name" value="RNA_pol_asu"/>
</dbReference>
<dbReference type="InterPro" id="IPR006592">
    <property type="entry name" value="RNA_pol_N"/>
</dbReference>
<dbReference type="InterPro" id="IPR007080">
    <property type="entry name" value="RNA_pol_Rpb1_1"/>
</dbReference>
<dbReference type="InterPro" id="IPR007066">
    <property type="entry name" value="RNA_pol_Rpb1_3"/>
</dbReference>
<dbReference type="InterPro" id="IPR042102">
    <property type="entry name" value="RNA_pol_Rpb1_3_sf"/>
</dbReference>
<dbReference type="InterPro" id="IPR007083">
    <property type="entry name" value="RNA_pol_Rpb1_4"/>
</dbReference>
<dbReference type="InterPro" id="IPR007081">
    <property type="entry name" value="RNA_pol_Rpb1_5"/>
</dbReference>
<dbReference type="InterPro" id="IPR044893">
    <property type="entry name" value="RNA_pol_Rpb1_clamp_domain"/>
</dbReference>
<dbReference type="InterPro" id="IPR038120">
    <property type="entry name" value="Rpb1_funnel_sf"/>
</dbReference>
<dbReference type="NCBIfam" id="TIGR02386">
    <property type="entry name" value="rpoC_TIGR"/>
    <property type="match status" value="1"/>
</dbReference>
<dbReference type="PANTHER" id="PTHR19376">
    <property type="entry name" value="DNA-DIRECTED RNA POLYMERASE"/>
    <property type="match status" value="1"/>
</dbReference>
<dbReference type="PANTHER" id="PTHR19376:SF54">
    <property type="entry name" value="DNA-DIRECTED RNA POLYMERASE SUBUNIT BETA"/>
    <property type="match status" value="1"/>
</dbReference>
<dbReference type="Pfam" id="PF04997">
    <property type="entry name" value="RNA_pol_Rpb1_1"/>
    <property type="match status" value="1"/>
</dbReference>
<dbReference type="Pfam" id="PF00623">
    <property type="entry name" value="RNA_pol_Rpb1_2"/>
    <property type="match status" value="2"/>
</dbReference>
<dbReference type="Pfam" id="PF04983">
    <property type="entry name" value="RNA_pol_Rpb1_3"/>
    <property type="match status" value="1"/>
</dbReference>
<dbReference type="Pfam" id="PF05000">
    <property type="entry name" value="RNA_pol_Rpb1_4"/>
    <property type="match status" value="1"/>
</dbReference>
<dbReference type="Pfam" id="PF04998">
    <property type="entry name" value="RNA_pol_Rpb1_5"/>
    <property type="match status" value="1"/>
</dbReference>
<dbReference type="SMART" id="SM00663">
    <property type="entry name" value="RPOLA_N"/>
    <property type="match status" value="1"/>
</dbReference>
<dbReference type="SUPFAM" id="SSF64484">
    <property type="entry name" value="beta and beta-prime subunits of DNA dependent RNA-polymerase"/>
    <property type="match status" value="1"/>
</dbReference>
<accession>Q5PK92</accession>
<name>RPOC_SALPA</name>
<organism>
    <name type="scientific">Salmonella paratyphi A (strain ATCC 9150 / SARB42)</name>
    <dbReference type="NCBI Taxonomy" id="295319"/>
    <lineage>
        <taxon>Bacteria</taxon>
        <taxon>Pseudomonadati</taxon>
        <taxon>Pseudomonadota</taxon>
        <taxon>Gammaproteobacteria</taxon>
        <taxon>Enterobacterales</taxon>
        <taxon>Enterobacteriaceae</taxon>
        <taxon>Salmonella</taxon>
    </lineage>
</organism>
<gene>
    <name evidence="1" type="primary">rpoC</name>
    <name type="ordered locus">SPA3992</name>
</gene>
<comment type="function">
    <text evidence="1">DNA-dependent RNA polymerase catalyzes the transcription of DNA into RNA using the four ribonucleoside triphosphates as substrates.</text>
</comment>
<comment type="catalytic activity">
    <reaction evidence="1">
        <text>RNA(n) + a ribonucleoside 5'-triphosphate = RNA(n+1) + diphosphate</text>
        <dbReference type="Rhea" id="RHEA:21248"/>
        <dbReference type="Rhea" id="RHEA-COMP:14527"/>
        <dbReference type="Rhea" id="RHEA-COMP:17342"/>
        <dbReference type="ChEBI" id="CHEBI:33019"/>
        <dbReference type="ChEBI" id="CHEBI:61557"/>
        <dbReference type="ChEBI" id="CHEBI:140395"/>
        <dbReference type="EC" id="2.7.7.6"/>
    </reaction>
</comment>
<comment type="cofactor">
    <cofactor evidence="1">
        <name>Mg(2+)</name>
        <dbReference type="ChEBI" id="CHEBI:18420"/>
    </cofactor>
    <text evidence="1">Binds 1 Mg(2+) ion per subunit.</text>
</comment>
<comment type="cofactor">
    <cofactor evidence="1">
        <name>Zn(2+)</name>
        <dbReference type="ChEBI" id="CHEBI:29105"/>
    </cofactor>
    <text evidence="1">Binds 2 Zn(2+) ions per subunit.</text>
</comment>
<comment type="subunit">
    <text evidence="1">The RNAP catalytic core consists of 2 alpha, 1 beta, 1 beta' and 1 omega subunit. When a sigma factor is associated with the core the holoenzyme is formed, which can initiate transcription.</text>
</comment>
<comment type="similarity">
    <text evidence="1">Belongs to the RNA polymerase beta' chain family.</text>
</comment>
<protein>
    <recommendedName>
        <fullName evidence="1">DNA-directed RNA polymerase subunit beta'</fullName>
        <shortName evidence="1">RNAP subunit beta'</shortName>
        <ecNumber evidence="1">2.7.7.6</ecNumber>
    </recommendedName>
    <alternativeName>
        <fullName evidence="1">RNA polymerase subunit beta'</fullName>
    </alternativeName>
    <alternativeName>
        <fullName evidence="1">Transcriptase subunit beta'</fullName>
    </alternativeName>
</protein>
<feature type="chain" id="PRO_0000225576" description="DNA-directed RNA polymerase subunit beta'">
    <location>
        <begin position="1"/>
        <end position="1407"/>
    </location>
</feature>
<feature type="binding site" evidence="1">
    <location>
        <position position="70"/>
    </location>
    <ligand>
        <name>Zn(2+)</name>
        <dbReference type="ChEBI" id="CHEBI:29105"/>
        <label>1</label>
    </ligand>
</feature>
<feature type="binding site" evidence="1">
    <location>
        <position position="72"/>
    </location>
    <ligand>
        <name>Zn(2+)</name>
        <dbReference type="ChEBI" id="CHEBI:29105"/>
        <label>1</label>
    </ligand>
</feature>
<feature type="binding site" evidence="1">
    <location>
        <position position="85"/>
    </location>
    <ligand>
        <name>Zn(2+)</name>
        <dbReference type="ChEBI" id="CHEBI:29105"/>
        <label>1</label>
    </ligand>
</feature>
<feature type="binding site" evidence="1">
    <location>
        <position position="88"/>
    </location>
    <ligand>
        <name>Zn(2+)</name>
        <dbReference type="ChEBI" id="CHEBI:29105"/>
        <label>1</label>
    </ligand>
</feature>
<feature type="binding site" evidence="1">
    <location>
        <position position="460"/>
    </location>
    <ligand>
        <name>Mg(2+)</name>
        <dbReference type="ChEBI" id="CHEBI:18420"/>
    </ligand>
</feature>
<feature type="binding site" evidence="1">
    <location>
        <position position="462"/>
    </location>
    <ligand>
        <name>Mg(2+)</name>
        <dbReference type="ChEBI" id="CHEBI:18420"/>
    </ligand>
</feature>
<feature type="binding site" evidence="1">
    <location>
        <position position="464"/>
    </location>
    <ligand>
        <name>Mg(2+)</name>
        <dbReference type="ChEBI" id="CHEBI:18420"/>
    </ligand>
</feature>
<feature type="binding site" evidence="1">
    <location>
        <position position="814"/>
    </location>
    <ligand>
        <name>Zn(2+)</name>
        <dbReference type="ChEBI" id="CHEBI:29105"/>
        <label>2</label>
    </ligand>
</feature>
<feature type="binding site" evidence="1">
    <location>
        <position position="888"/>
    </location>
    <ligand>
        <name>Zn(2+)</name>
        <dbReference type="ChEBI" id="CHEBI:29105"/>
        <label>2</label>
    </ligand>
</feature>
<feature type="binding site" evidence="1">
    <location>
        <position position="895"/>
    </location>
    <ligand>
        <name>Zn(2+)</name>
        <dbReference type="ChEBI" id="CHEBI:29105"/>
        <label>2</label>
    </ligand>
</feature>
<feature type="binding site" evidence="1">
    <location>
        <position position="898"/>
    </location>
    <ligand>
        <name>Zn(2+)</name>
        <dbReference type="ChEBI" id="CHEBI:29105"/>
        <label>2</label>
    </ligand>
</feature>
<proteinExistence type="inferred from homology"/>
<sequence>MKDLLKFLKAQTKTEEFDAIKIALASPDMIRSWSFGEVKKPETINYRTFKPERDGLFCARIFGPVKDYECLCGKYKRLKHRGVICEKCGVEVTQTKVRRERMGHIELASPTAHIWFLKSLPSRIGLLLDMPLRDIERVLYFESYVVIEGGMTNLERQQILTEEQYLDALEEFGDEFDAKMGAEAIQALLKSMDLEQECETLREELNETNSETKRKKLTKRIKLLEAFVQSGNKPEWMILTVLPVLPPDLRPLVPLDGGRFATSDLNDLYRRVINRNNRLKRLLDLAAPDIIVRNEKRMLQEAVDALLDNGRRGRAITGSNKRPLKSLADMIKGKQGRFRQNLLGKRVDYSGRSVITVGPYLRLHQCGLPKKMALELFKPFIYGKLELRGLATTIKAAKKMVEREEAVVWDILDEVIREHPVLLNRAPTLHRLGIQAFEPVLIEGKAIQLHPLVCAAYNADFDGDQMAVHVPLTLEAQLEARALMMSTNNILSPANGEPIIVPSQDVVLGLYYMTRDCVNAKGEGMVLTGPKEAERIYRAGLASLHARVKVRITEYEKDENGEFVAHTSLKDTTVGRAILWMIVPKGLPFSIVNQALGKKAISKMLNTCYRILGLKPTVIFADQTMYTGFAYAARSGASVGIDDMVIPEKKHEIISEAEAEVAEIQEQFQSGLVTAGERYNKVIDIWAAANDRVSKAMMDNLQTETVINRDGQEEQQVSFNSIYMMADSGARGSAAQIRQLAGMRGLMAKPDGSIIETPITANFREGLNVLQYFISTHGARKGLADTALKTANSGYLTRRLVDVAQDLVVTEDDCGTHEGILMTPVIEGGDVKEPLRDRVLGRVTAEDVLNPGTADILVPRNTLLHEQWCDLLEANSVDAVKVRSVVSCDTDFGVCAHCYGRDLARGHIINKGEAIGVIAAQSIGEPGTQLTMRTFHIGGAASRAAAESSIQVKNKGSIKLSNVKSVVNSSGKLVITSRNTELKLIDEFGRTKESYKVPYGAVMAKGDGEQVAGGETVANWDPHTMPVITEVSGFIRFTDMIDGQTITRQTDELTGLSSLVVLDSAERTTGGKDLRPALKIVDAQGNDVLIPGTDMPAQYFLPGKAIVQLEDGVQISSGDTLARIPQESGGTKDITGGLPRVADLFEARRPKEPAILAEIAGIVSFGKETKGKRRLVITPVDGSDPYEEMIPKWRQLNVFEGERVERGDVISDGPEAPHDILRLRGVHAVTRYIVNEVQDVYRLQGVKINDKHIEVIVRQMLRKATIESAGSSDFLEGEQVEYSRVKIANRELEANGKVGATFSRDLLGITKASLATESFISAASFQETTRVLTEAAVAGKRDELRGLKENVIVGRLIPAGTGYAYHQDRMRRRAAGEQLATPQVTAEDASASLAELLNAGLGGSDNE</sequence>
<evidence type="ECO:0000255" key="1">
    <source>
        <dbReference type="HAMAP-Rule" id="MF_01322"/>
    </source>
</evidence>